<comment type="function">
    <text evidence="1">Catalyzes the 2'-O-methylation at nucleotide C2498 in 23S rRNA.</text>
</comment>
<comment type="catalytic activity">
    <reaction evidence="1">
        <text>cytidine(2498) in 23S rRNA + S-adenosyl-L-methionine = 2'-O-methylcytidine(2498) in 23S rRNA + S-adenosyl-L-homocysteine + H(+)</text>
        <dbReference type="Rhea" id="RHEA:42788"/>
        <dbReference type="Rhea" id="RHEA-COMP:10244"/>
        <dbReference type="Rhea" id="RHEA-COMP:10245"/>
        <dbReference type="ChEBI" id="CHEBI:15378"/>
        <dbReference type="ChEBI" id="CHEBI:57856"/>
        <dbReference type="ChEBI" id="CHEBI:59789"/>
        <dbReference type="ChEBI" id="CHEBI:74495"/>
        <dbReference type="ChEBI" id="CHEBI:82748"/>
        <dbReference type="EC" id="2.1.1.186"/>
    </reaction>
</comment>
<comment type="subunit">
    <text evidence="1">Monomer.</text>
</comment>
<comment type="subcellular location">
    <subcellularLocation>
        <location evidence="1">Cytoplasm</location>
    </subcellularLocation>
</comment>
<comment type="similarity">
    <text evidence="1">Belongs to the class I-like SAM-binding methyltransferase superfamily. RNA methyltransferase RlmE family. RlmM subfamily.</text>
</comment>
<evidence type="ECO:0000255" key="1">
    <source>
        <dbReference type="HAMAP-Rule" id="MF_01551"/>
    </source>
</evidence>
<reference key="1">
    <citation type="journal article" date="2008" name="BMC Genomics">
        <title>The genome sequence of the fish pathogen Aliivibrio salmonicida strain LFI1238 shows extensive evidence of gene decay.</title>
        <authorList>
            <person name="Hjerde E."/>
            <person name="Lorentzen M.S."/>
            <person name="Holden M.T."/>
            <person name="Seeger K."/>
            <person name="Paulsen S."/>
            <person name="Bason N."/>
            <person name="Churcher C."/>
            <person name="Harris D."/>
            <person name="Norbertczak H."/>
            <person name="Quail M.A."/>
            <person name="Sanders S."/>
            <person name="Thurston S."/>
            <person name="Parkhill J."/>
            <person name="Willassen N.P."/>
            <person name="Thomson N.R."/>
        </authorList>
    </citation>
    <scope>NUCLEOTIDE SEQUENCE [LARGE SCALE GENOMIC DNA]</scope>
    <source>
        <strain>LFI1238</strain>
    </source>
</reference>
<name>RLMM_ALISL</name>
<sequence length="363" mass="41829">MKQVMFYCRSGFEKECAGEIQDKATQLEVFGFPRLKSNTGYVLFECYQEGDADKLIQQIKFNELIFARQMFAVATELSDLPTEDRISPILNALSSVEGVPHCGDIRIETPDTNEAKELLKFCRKFTVPLRQALRGKQMLTARDTDRIPVMHVCFIEPGHCYVGYSYTNNNSKFFMGIPRLKFPSDSPSRSTLKLEEAFHVFIPRDEWDTRLASGMWAVDLGACPGGWTYQLVKRSMFVHAIDNGMMAQSLMDTGQVKHHMVDGFKFEPQRKNVTWIVCDMIEKPARVAHLMGEWLIKGWAKEALFNLKLPMKGRYDEVLQDIENLKEFLNKNGFKYKLQAKHLYHDREEITVHIQAITNISPH</sequence>
<organism>
    <name type="scientific">Aliivibrio salmonicida (strain LFI1238)</name>
    <name type="common">Vibrio salmonicida (strain LFI1238)</name>
    <dbReference type="NCBI Taxonomy" id="316275"/>
    <lineage>
        <taxon>Bacteria</taxon>
        <taxon>Pseudomonadati</taxon>
        <taxon>Pseudomonadota</taxon>
        <taxon>Gammaproteobacteria</taxon>
        <taxon>Vibrionales</taxon>
        <taxon>Vibrionaceae</taxon>
        <taxon>Aliivibrio</taxon>
    </lineage>
</organism>
<keyword id="KW-0963">Cytoplasm</keyword>
<keyword id="KW-0489">Methyltransferase</keyword>
<keyword id="KW-0698">rRNA processing</keyword>
<keyword id="KW-0949">S-adenosyl-L-methionine</keyword>
<keyword id="KW-0808">Transferase</keyword>
<gene>
    <name evidence="1" type="primary">rlmM</name>
    <name type="ordered locus">VSAL_I0693</name>
</gene>
<proteinExistence type="inferred from homology"/>
<dbReference type="EC" id="2.1.1.186" evidence="1"/>
<dbReference type="EMBL" id="FM178379">
    <property type="protein sequence ID" value="CAQ78378.1"/>
    <property type="molecule type" value="Genomic_DNA"/>
</dbReference>
<dbReference type="RefSeq" id="WP_012549498.1">
    <property type="nucleotide sequence ID" value="NC_011312.1"/>
</dbReference>
<dbReference type="SMR" id="B6EGG2"/>
<dbReference type="KEGG" id="vsa:VSAL_I0693"/>
<dbReference type="eggNOG" id="COG2933">
    <property type="taxonomic scope" value="Bacteria"/>
</dbReference>
<dbReference type="HOGENOM" id="CLU_043780_0_0_6"/>
<dbReference type="Proteomes" id="UP000001730">
    <property type="component" value="Chromosome 1"/>
</dbReference>
<dbReference type="GO" id="GO:0005737">
    <property type="term" value="C:cytoplasm"/>
    <property type="evidence" value="ECO:0007669"/>
    <property type="project" value="UniProtKB-SubCell"/>
</dbReference>
<dbReference type="GO" id="GO:0008757">
    <property type="term" value="F:S-adenosylmethionine-dependent methyltransferase activity"/>
    <property type="evidence" value="ECO:0007669"/>
    <property type="project" value="UniProtKB-UniRule"/>
</dbReference>
<dbReference type="GO" id="GO:0032259">
    <property type="term" value="P:methylation"/>
    <property type="evidence" value="ECO:0007669"/>
    <property type="project" value="UniProtKB-KW"/>
</dbReference>
<dbReference type="GO" id="GO:0006364">
    <property type="term" value="P:rRNA processing"/>
    <property type="evidence" value="ECO:0007669"/>
    <property type="project" value="UniProtKB-UniRule"/>
</dbReference>
<dbReference type="Gene3D" id="3.30.2300.20">
    <property type="match status" value="1"/>
</dbReference>
<dbReference type="Gene3D" id="3.30.70.2810">
    <property type="match status" value="1"/>
</dbReference>
<dbReference type="Gene3D" id="3.40.50.150">
    <property type="entry name" value="Vaccinia Virus protein VP39"/>
    <property type="match status" value="1"/>
</dbReference>
<dbReference type="HAMAP" id="MF_01551">
    <property type="entry name" value="23SrRNA_methyltr_M"/>
    <property type="match status" value="1"/>
</dbReference>
<dbReference type="InterPro" id="IPR040739">
    <property type="entry name" value="RlmM_FDX"/>
</dbReference>
<dbReference type="InterPro" id="IPR048646">
    <property type="entry name" value="RlmM_THUMP-like"/>
</dbReference>
<dbReference type="InterPro" id="IPR002877">
    <property type="entry name" value="RNA_MeTrfase_FtsJ_dom"/>
</dbReference>
<dbReference type="InterPro" id="IPR011224">
    <property type="entry name" value="rRNA_MeTrfase_M"/>
</dbReference>
<dbReference type="InterPro" id="IPR029063">
    <property type="entry name" value="SAM-dependent_MTases_sf"/>
</dbReference>
<dbReference type="NCBIfam" id="NF008734">
    <property type="entry name" value="PRK11760.1"/>
    <property type="match status" value="1"/>
</dbReference>
<dbReference type="PANTHER" id="PTHR37524">
    <property type="entry name" value="RIBOSOMAL RNA LARGE SUBUNIT METHYLTRANSFERASE M"/>
    <property type="match status" value="1"/>
</dbReference>
<dbReference type="PANTHER" id="PTHR37524:SF2">
    <property type="entry name" value="RIBOSOMAL RNA METHYLTRANSFERASE FTSJ DOMAIN-CONTAINING PROTEIN"/>
    <property type="match status" value="1"/>
</dbReference>
<dbReference type="Pfam" id="PF01728">
    <property type="entry name" value="FtsJ"/>
    <property type="match status" value="1"/>
</dbReference>
<dbReference type="Pfam" id="PF18125">
    <property type="entry name" value="RlmM_FDX"/>
    <property type="match status" value="1"/>
</dbReference>
<dbReference type="Pfam" id="PF21239">
    <property type="entry name" value="RLMM_N"/>
    <property type="match status" value="1"/>
</dbReference>
<dbReference type="PIRSF" id="PIRSF028774">
    <property type="entry name" value="UCP028774"/>
    <property type="match status" value="1"/>
</dbReference>
<dbReference type="SUPFAM" id="SSF53335">
    <property type="entry name" value="S-adenosyl-L-methionine-dependent methyltransferases"/>
    <property type="match status" value="1"/>
</dbReference>
<protein>
    <recommendedName>
        <fullName evidence="1">Ribosomal RNA large subunit methyltransferase M</fullName>
        <ecNumber evidence="1">2.1.1.186</ecNumber>
    </recommendedName>
    <alternativeName>
        <fullName evidence="1">23S rRNA (cytidine2498-2'-O)-methyltransferase</fullName>
    </alternativeName>
    <alternativeName>
        <fullName evidence="1">23S rRNA 2'-O-ribose methyltransferase RlmM</fullName>
    </alternativeName>
</protein>
<accession>B6EGG2</accession>
<feature type="chain" id="PRO_1000201509" description="Ribosomal RNA large subunit methyltransferase M">
    <location>
        <begin position="1"/>
        <end position="363"/>
    </location>
</feature>
<feature type="active site" description="Proton acceptor" evidence="1">
    <location>
        <position position="308"/>
    </location>
</feature>
<feature type="binding site" evidence="1">
    <location>
        <position position="190"/>
    </location>
    <ligand>
        <name>S-adenosyl-L-methionine</name>
        <dbReference type="ChEBI" id="CHEBI:59789"/>
    </ligand>
</feature>
<feature type="binding site" evidence="1">
    <location>
        <begin position="223"/>
        <end position="226"/>
    </location>
    <ligand>
        <name>S-adenosyl-L-methionine</name>
        <dbReference type="ChEBI" id="CHEBI:59789"/>
    </ligand>
</feature>
<feature type="binding site" evidence="1">
    <location>
        <position position="242"/>
    </location>
    <ligand>
        <name>S-adenosyl-L-methionine</name>
        <dbReference type="ChEBI" id="CHEBI:59789"/>
    </ligand>
</feature>
<feature type="binding site" evidence="1">
    <location>
        <position position="262"/>
    </location>
    <ligand>
        <name>S-adenosyl-L-methionine</name>
        <dbReference type="ChEBI" id="CHEBI:59789"/>
    </ligand>
</feature>
<feature type="binding site" evidence="1">
    <location>
        <position position="279"/>
    </location>
    <ligand>
        <name>S-adenosyl-L-methionine</name>
        <dbReference type="ChEBI" id="CHEBI:59789"/>
    </ligand>
</feature>